<proteinExistence type="inferred from homology"/>
<accession>A1L3N6</accession>
<keyword id="KW-1015">Disulfide bond</keyword>
<keyword id="KW-1185">Reference proteome</keyword>
<sequence>MPKYYEEKEEEKHPCGGVKEDLKNCLLQSDCVLQEGKSPKECLKEGYCKALQVTFFECKRSILDNRARFRGRKGY</sequence>
<evidence type="ECO:0000250" key="1"/>
<evidence type="ECO:0000255" key="2">
    <source>
        <dbReference type="PROSITE-ProRule" id="PRU01150"/>
    </source>
</evidence>
<evidence type="ECO:0000305" key="3"/>
<gene>
    <name type="primary">coa5</name>
</gene>
<feature type="chain" id="PRO_0000325880" description="Cytochrome c oxidase assembly factor 5">
    <location>
        <begin position="1"/>
        <end position="75"/>
    </location>
</feature>
<feature type="domain" description="CHCH" evidence="2">
    <location>
        <begin position="28"/>
        <end position="66"/>
    </location>
</feature>
<feature type="short sequence motif" description="Cx10C motif" evidence="2">
    <location>
        <begin position="31"/>
        <end position="42"/>
    </location>
</feature>
<feature type="short sequence motif" description="Cx9C motif" evidence="2">
    <location>
        <begin position="48"/>
        <end position="58"/>
    </location>
</feature>
<feature type="disulfide bond" evidence="2">
    <location>
        <begin position="31"/>
        <end position="58"/>
    </location>
</feature>
<feature type="disulfide bond" evidence="2">
    <location>
        <begin position="42"/>
        <end position="48"/>
    </location>
</feature>
<protein>
    <recommendedName>
        <fullName>Cytochrome c oxidase assembly factor 5</fullName>
    </recommendedName>
</protein>
<name>COA5_XENLA</name>
<comment type="function">
    <text evidence="1">Involved in an early step of the mitochondrial complex IV assembly process.</text>
</comment>
<comment type="similarity">
    <text evidence="3">Belongs to the PET191 family.</text>
</comment>
<dbReference type="EMBL" id="BC130211">
    <property type="protein sequence ID" value="AAI30212.1"/>
    <property type="molecule type" value="mRNA"/>
</dbReference>
<dbReference type="RefSeq" id="NP_001165254.1">
    <property type="nucleotide sequence ID" value="NM_001171783.1"/>
</dbReference>
<dbReference type="SMR" id="A1L3N6"/>
<dbReference type="GeneID" id="100037054"/>
<dbReference type="KEGG" id="xla:100037054"/>
<dbReference type="AGR" id="Xenbase:XB-GENE-6486050"/>
<dbReference type="CTD" id="100037054"/>
<dbReference type="Xenbase" id="XB-GENE-6486050">
    <property type="gene designation" value="coa5.L"/>
</dbReference>
<dbReference type="OrthoDB" id="282149at2759"/>
<dbReference type="Proteomes" id="UP000186698">
    <property type="component" value="Chromosome 2L"/>
</dbReference>
<dbReference type="Bgee" id="100037054">
    <property type="expression patterns" value="Expressed in muscle tissue and 19 other cell types or tissues"/>
</dbReference>
<dbReference type="GO" id="GO:0005739">
    <property type="term" value="C:mitochondrion"/>
    <property type="evidence" value="ECO:0000318"/>
    <property type="project" value="GO_Central"/>
</dbReference>
<dbReference type="GO" id="GO:0033617">
    <property type="term" value="P:mitochondrial cytochrome c oxidase assembly"/>
    <property type="evidence" value="ECO:0000318"/>
    <property type="project" value="GO_Central"/>
</dbReference>
<dbReference type="InterPro" id="IPR018793">
    <property type="entry name" value="Cyt_c_oxidase_assmbl_Pet191"/>
</dbReference>
<dbReference type="PANTHER" id="PTHR28627">
    <property type="entry name" value="CYTOCHROME C OXIDASE ASSEMBLY FACTOR 5"/>
    <property type="match status" value="1"/>
</dbReference>
<dbReference type="PANTHER" id="PTHR28627:SF1">
    <property type="entry name" value="CYTOCHROME C OXIDASE ASSEMBLY FACTOR 5"/>
    <property type="match status" value="1"/>
</dbReference>
<dbReference type="Pfam" id="PF10203">
    <property type="entry name" value="Pet191_N"/>
    <property type="match status" value="1"/>
</dbReference>
<dbReference type="PROSITE" id="PS51808">
    <property type="entry name" value="CHCH"/>
    <property type="match status" value="1"/>
</dbReference>
<reference key="1">
    <citation type="submission" date="2006-12" db="EMBL/GenBank/DDBJ databases">
        <authorList>
            <consortium name="NIH - Xenopus Gene Collection (XGC) project"/>
        </authorList>
    </citation>
    <scope>NUCLEOTIDE SEQUENCE [LARGE SCALE MRNA]</scope>
    <source>
        <tissue>Eye</tissue>
    </source>
</reference>
<organism>
    <name type="scientific">Xenopus laevis</name>
    <name type="common">African clawed frog</name>
    <dbReference type="NCBI Taxonomy" id="8355"/>
    <lineage>
        <taxon>Eukaryota</taxon>
        <taxon>Metazoa</taxon>
        <taxon>Chordata</taxon>
        <taxon>Craniata</taxon>
        <taxon>Vertebrata</taxon>
        <taxon>Euteleostomi</taxon>
        <taxon>Amphibia</taxon>
        <taxon>Batrachia</taxon>
        <taxon>Anura</taxon>
        <taxon>Pipoidea</taxon>
        <taxon>Pipidae</taxon>
        <taxon>Xenopodinae</taxon>
        <taxon>Xenopus</taxon>
        <taxon>Xenopus</taxon>
    </lineage>
</organism>